<evidence type="ECO:0000255" key="1"/>
<evidence type="ECO:0000255" key="2">
    <source>
        <dbReference type="PROSITE-ProRule" id="PRU00434"/>
    </source>
</evidence>
<evidence type="ECO:0000269" key="3">
    <source>
    </source>
</evidence>
<evidence type="ECO:0000269" key="4">
    <source>
    </source>
</evidence>
<evidence type="ECO:0000305" key="5"/>
<feature type="chain" id="PRO_0000391405" description="ABC transporter G family member 22">
    <location>
        <begin position="1"/>
        <end position="615"/>
    </location>
</feature>
<feature type="transmembrane region" description="Helical" evidence="1">
    <location>
        <begin position="370"/>
        <end position="390"/>
    </location>
</feature>
<feature type="transmembrane region" description="Helical" evidence="1">
    <location>
        <begin position="400"/>
        <end position="420"/>
    </location>
</feature>
<feature type="transmembrane region" description="Helical" evidence="1">
    <location>
        <begin position="442"/>
        <end position="462"/>
    </location>
</feature>
<feature type="transmembrane region" description="Helical" evidence="1">
    <location>
        <begin position="477"/>
        <end position="497"/>
    </location>
</feature>
<feature type="transmembrane region" description="Helical" evidence="1">
    <location>
        <begin position="508"/>
        <end position="528"/>
    </location>
</feature>
<feature type="transmembrane region" description="Helical" evidence="1">
    <location>
        <begin position="587"/>
        <end position="607"/>
    </location>
</feature>
<feature type="domain" description="ABC transporter" evidence="2">
    <location>
        <begin position="31"/>
        <end position="279"/>
    </location>
</feature>
<feature type="domain" description="ABC transmembrane type-2">
    <location>
        <begin position="364"/>
        <end position="610"/>
    </location>
</feature>
<feature type="binding site" evidence="2">
    <location>
        <begin position="67"/>
        <end position="74"/>
    </location>
    <ligand>
        <name>ATP</name>
        <dbReference type="ChEBI" id="CHEBI:30616"/>
    </ligand>
</feature>
<name>ABCGM_DICDI</name>
<reference key="1">
    <citation type="journal article" date="2005" name="Nature">
        <title>The genome of the social amoeba Dictyostelium discoideum.</title>
        <authorList>
            <person name="Eichinger L."/>
            <person name="Pachebat J.A."/>
            <person name="Gloeckner G."/>
            <person name="Rajandream M.A."/>
            <person name="Sucgang R."/>
            <person name="Berriman M."/>
            <person name="Song J."/>
            <person name="Olsen R."/>
            <person name="Szafranski K."/>
            <person name="Xu Q."/>
            <person name="Tunggal B."/>
            <person name="Kummerfeld S."/>
            <person name="Madera M."/>
            <person name="Konfortov B.A."/>
            <person name="Rivero F."/>
            <person name="Bankier A.T."/>
            <person name="Lehmann R."/>
            <person name="Hamlin N."/>
            <person name="Davies R."/>
            <person name="Gaudet P."/>
            <person name="Fey P."/>
            <person name="Pilcher K."/>
            <person name="Chen G."/>
            <person name="Saunders D."/>
            <person name="Sodergren E.J."/>
            <person name="Davis P."/>
            <person name="Kerhornou A."/>
            <person name="Nie X."/>
            <person name="Hall N."/>
            <person name="Anjard C."/>
            <person name="Hemphill L."/>
            <person name="Bason N."/>
            <person name="Farbrother P."/>
            <person name="Desany B."/>
            <person name="Just E."/>
            <person name="Morio T."/>
            <person name="Rost R."/>
            <person name="Churcher C.M."/>
            <person name="Cooper J."/>
            <person name="Haydock S."/>
            <person name="van Driessche N."/>
            <person name="Cronin A."/>
            <person name="Goodhead I."/>
            <person name="Muzny D.M."/>
            <person name="Mourier T."/>
            <person name="Pain A."/>
            <person name="Lu M."/>
            <person name="Harper D."/>
            <person name="Lindsay R."/>
            <person name="Hauser H."/>
            <person name="James K.D."/>
            <person name="Quiles M."/>
            <person name="Madan Babu M."/>
            <person name="Saito T."/>
            <person name="Buchrieser C."/>
            <person name="Wardroper A."/>
            <person name="Felder M."/>
            <person name="Thangavelu M."/>
            <person name="Johnson D."/>
            <person name="Knights A."/>
            <person name="Loulseged H."/>
            <person name="Mungall K.L."/>
            <person name="Oliver K."/>
            <person name="Price C."/>
            <person name="Quail M.A."/>
            <person name="Urushihara H."/>
            <person name="Hernandez J."/>
            <person name="Rabbinowitsch E."/>
            <person name="Steffen D."/>
            <person name="Sanders M."/>
            <person name="Ma J."/>
            <person name="Kohara Y."/>
            <person name="Sharp S."/>
            <person name="Simmonds M.N."/>
            <person name="Spiegler S."/>
            <person name="Tivey A."/>
            <person name="Sugano S."/>
            <person name="White B."/>
            <person name="Walker D."/>
            <person name="Woodward J.R."/>
            <person name="Winckler T."/>
            <person name="Tanaka Y."/>
            <person name="Shaulsky G."/>
            <person name="Schleicher M."/>
            <person name="Weinstock G.M."/>
            <person name="Rosenthal A."/>
            <person name="Cox E.C."/>
            <person name="Chisholm R.L."/>
            <person name="Gibbs R.A."/>
            <person name="Loomis W.F."/>
            <person name="Platzer M."/>
            <person name="Kay R.R."/>
            <person name="Williams J.G."/>
            <person name="Dear P.H."/>
            <person name="Noegel A.A."/>
            <person name="Barrell B.G."/>
            <person name="Kuspa A."/>
        </authorList>
    </citation>
    <scope>NUCLEOTIDE SEQUENCE [LARGE SCALE GENOMIC DNA]</scope>
    <source>
        <strain>AX4</strain>
    </source>
</reference>
<reference key="2">
    <citation type="journal article" date="2007" name="BMC Genomics">
        <title>STATc is a key regulator of the transcriptional response to hyperosmotic shock.</title>
        <authorList>
            <person name="Na J."/>
            <person name="Tunggal B."/>
            <person name="Eichinger L."/>
        </authorList>
    </citation>
    <scope>INDUCTION</scope>
</reference>
<reference key="3">
    <citation type="journal article" date="2008" name="Exp. Cell Res.">
        <title>Screening of genes involved in cell migration in Dictyostelium.</title>
        <authorList>
            <person name="Nagasaki A."/>
            <person name="Uyeda T.Q.P."/>
        </authorList>
    </citation>
    <scope>FUNCTION</scope>
</reference>
<proteinExistence type="evidence at transcript level"/>
<sequence length="615" mass="68269">MDQVSIEMSSTPRPTMVKSKSQLSLRRSLTITFKDLAYSVTVKKKKMQILKGVSGTVTPGELVAVFGPSGSGKTTLLDILANRKESGEISGAVLINGNEIDDDYKRLCSYVVQEDVLLPTITVRETLRFYADLKLPKSWTEKEKHERIEQILEQIGLSHRADAKIGGVLPGGIVLRGLSGGEKRRVSIGCGLVTSPSIVLLDEPTSGLDTTSAMAVMKTLVELTQQKSVTVICTIHQPRSEIFKLFTKIMVLAEGRLVYYGNRPVEHFTEIGFPFPDQTNPADYILDAVTTIKEEGRADEIADRLQSSYLDQANQESSSTLTQSQLGIINASGKRKINAYNNGLFTQFLVLWKRTGLDFIRNPSNCLVRFAVAVFVGLLFGACFSGLGMDEKGVQSRSAVLFYLVINMILQPFASISLFISKRTLFNAERASKLYHTLPYYLALMFFEILACIGTAFILGTITYWFADLNPGADKYFFAMAILTLAHLAGDFFMLIISCITVQVDTSFAVGAGVATIYQLFAGFFVPINALPKSFEWLHWCNFVYYSFEALMHNEFVGETVNCGQLACPTGRDVLINLGLNNRGKGINLIIVSSFAFAFFTMVFLCLHYFHREKR</sequence>
<protein>
    <recommendedName>
        <fullName>ABC transporter G family member 22</fullName>
    </recommendedName>
    <alternativeName>
        <fullName>ABC transporter ABCG.22</fullName>
    </alternativeName>
</protein>
<comment type="function">
    <text evidence="4">May be involved in cell migration.</text>
</comment>
<comment type="subcellular location">
    <subcellularLocation>
        <location evidence="5">Membrane</location>
        <topology evidence="5">Multi-pass membrane protein</topology>
    </subcellularLocation>
</comment>
<comment type="induction">
    <text evidence="3">By hperosmotic shock provoked by sorbitol.</text>
</comment>
<comment type="similarity">
    <text evidence="5">Belongs to the ABC transporter superfamily. ABCG family. Eye pigment precursor importer (TC 3.A.1.204) subfamily.</text>
</comment>
<accession>Q55DA0</accession>
<organism>
    <name type="scientific">Dictyostelium discoideum</name>
    <name type="common">Social amoeba</name>
    <dbReference type="NCBI Taxonomy" id="44689"/>
    <lineage>
        <taxon>Eukaryota</taxon>
        <taxon>Amoebozoa</taxon>
        <taxon>Evosea</taxon>
        <taxon>Eumycetozoa</taxon>
        <taxon>Dictyostelia</taxon>
        <taxon>Dictyosteliales</taxon>
        <taxon>Dictyosteliaceae</taxon>
        <taxon>Dictyostelium</taxon>
    </lineage>
</organism>
<dbReference type="EMBL" id="AAFI02000005">
    <property type="protein sequence ID" value="EAL72763.1"/>
    <property type="molecule type" value="Genomic_DNA"/>
</dbReference>
<dbReference type="RefSeq" id="XP_646231.1">
    <property type="nucleotide sequence ID" value="XM_641139.1"/>
</dbReference>
<dbReference type="SMR" id="Q55DA0"/>
<dbReference type="FunCoup" id="Q55DA0">
    <property type="interactions" value="31"/>
</dbReference>
<dbReference type="STRING" id="44689.Q55DA0"/>
<dbReference type="GlyGen" id="Q55DA0">
    <property type="glycosylation" value="1 site"/>
</dbReference>
<dbReference type="PaxDb" id="44689-DDB0214899"/>
<dbReference type="EnsemblProtists" id="EAL72763">
    <property type="protein sequence ID" value="EAL72763"/>
    <property type="gene ID" value="DDB_G0270826"/>
</dbReference>
<dbReference type="GeneID" id="8617187"/>
<dbReference type="KEGG" id="ddi:DDB_G0270826"/>
<dbReference type="dictyBase" id="DDB_G0270826">
    <property type="gene designation" value="abcG22"/>
</dbReference>
<dbReference type="VEuPathDB" id="AmoebaDB:DDB_G0270826"/>
<dbReference type="eggNOG" id="KOG0061">
    <property type="taxonomic scope" value="Eukaryota"/>
</dbReference>
<dbReference type="HOGENOM" id="CLU_000604_57_8_1"/>
<dbReference type="InParanoid" id="Q55DA0"/>
<dbReference type="OMA" id="KQTWRIE"/>
<dbReference type="PhylomeDB" id="Q55DA0"/>
<dbReference type="Reactome" id="R-DDI-1369062">
    <property type="pathway name" value="ABC transporters in lipid homeostasis"/>
</dbReference>
<dbReference type="Reactome" id="R-DDI-1660661">
    <property type="pathway name" value="Sphingolipid de novo biosynthesis"/>
</dbReference>
<dbReference type="Reactome" id="R-DDI-189451">
    <property type="pathway name" value="Heme biosynthesis"/>
</dbReference>
<dbReference type="Reactome" id="R-DDI-189483">
    <property type="pathway name" value="Heme degradation"/>
</dbReference>
<dbReference type="Reactome" id="R-DDI-917937">
    <property type="pathway name" value="Iron uptake and transport"/>
</dbReference>
<dbReference type="Reactome" id="R-DDI-9753281">
    <property type="pathway name" value="Paracetamol ADME"/>
</dbReference>
<dbReference type="Reactome" id="R-DDI-9793528">
    <property type="pathway name" value="Ciprofloxacin ADME"/>
</dbReference>
<dbReference type="PRO" id="PR:Q55DA0"/>
<dbReference type="Proteomes" id="UP000002195">
    <property type="component" value="Chromosome 1"/>
</dbReference>
<dbReference type="GO" id="GO:0016020">
    <property type="term" value="C:membrane"/>
    <property type="evidence" value="ECO:0000318"/>
    <property type="project" value="GO_Central"/>
</dbReference>
<dbReference type="GO" id="GO:0140359">
    <property type="term" value="F:ABC-type transporter activity"/>
    <property type="evidence" value="ECO:0007669"/>
    <property type="project" value="InterPro"/>
</dbReference>
<dbReference type="GO" id="GO:0005524">
    <property type="term" value="F:ATP binding"/>
    <property type="evidence" value="ECO:0007669"/>
    <property type="project" value="UniProtKB-KW"/>
</dbReference>
<dbReference type="GO" id="GO:0016887">
    <property type="term" value="F:ATP hydrolysis activity"/>
    <property type="evidence" value="ECO:0007669"/>
    <property type="project" value="InterPro"/>
</dbReference>
<dbReference type="GO" id="GO:0042626">
    <property type="term" value="F:ATPase-coupled transmembrane transporter activity"/>
    <property type="evidence" value="ECO:0000318"/>
    <property type="project" value="GO_Central"/>
</dbReference>
<dbReference type="GO" id="GO:0031152">
    <property type="term" value="P:aggregation involved in sorocarp development"/>
    <property type="evidence" value="ECO:0000315"/>
    <property type="project" value="dictyBase"/>
</dbReference>
<dbReference type="GO" id="GO:0048870">
    <property type="term" value="P:cell motility"/>
    <property type="evidence" value="ECO:0000316"/>
    <property type="project" value="dictyBase"/>
</dbReference>
<dbReference type="GO" id="GO:0031288">
    <property type="term" value="P:sorocarp morphogenesis"/>
    <property type="evidence" value="ECO:0000315"/>
    <property type="project" value="dictyBase"/>
</dbReference>
<dbReference type="GO" id="GO:0055085">
    <property type="term" value="P:transmembrane transport"/>
    <property type="evidence" value="ECO:0000318"/>
    <property type="project" value="GO_Central"/>
</dbReference>
<dbReference type="CDD" id="cd03213">
    <property type="entry name" value="ABCG_EPDR"/>
    <property type="match status" value="1"/>
</dbReference>
<dbReference type="FunFam" id="3.40.50.300:FF:002300">
    <property type="entry name" value="ABC transporter G family protein"/>
    <property type="match status" value="1"/>
</dbReference>
<dbReference type="Gene3D" id="3.40.50.300">
    <property type="entry name" value="P-loop containing nucleotide triphosphate hydrolases"/>
    <property type="match status" value="1"/>
</dbReference>
<dbReference type="InterPro" id="IPR003593">
    <property type="entry name" value="AAA+_ATPase"/>
</dbReference>
<dbReference type="InterPro" id="IPR013525">
    <property type="entry name" value="ABC2_TM"/>
</dbReference>
<dbReference type="InterPro" id="IPR003439">
    <property type="entry name" value="ABC_transporter-like_ATP-bd"/>
</dbReference>
<dbReference type="InterPro" id="IPR017871">
    <property type="entry name" value="ABC_transporter-like_CS"/>
</dbReference>
<dbReference type="InterPro" id="IPR043926">
    <property type="entry name" value="ABCG_dom"/>
</dbReference>
<dbReference type="InterPro" id="IPR050352">
    <property type="entry name" value="ABCG_transporters"/>
</dbReference>
<dbReference type="InterPro" id="IPR027417">
    <property type="entry name" value="P-loop_NTPase"/>
</dbReference>
<dbReference type="PANTHER" id="PTHR48041:SF81">
    <property type="entry name" value="ABC TRANSPORTER G FAMILY MEMBER 22"/>
    <property type="match status" value="1"/>
</dbReference>
<dbReference type="PANTHER" id="PTHR48041">
    <property type="entry name" value="ABC TRANSPORTER G FAMILY MEMBER 28"/>
    <property type="match status" value="1"/>
</dbReference>
<dbReference type="Pfam" id="PF01061">
    <property type="entry name" value="ABC2_membrane"/>
    <property type="match status" value="1"/>
</dbReference>
<dbReference type="Pfam" id="PF19055">
    <property type="entry name" value="ABC2_membrane_7"/>
    <property type="match status" value="1"/>
</dbReference>
<dbReference type="Pfam" id="PF00005">
    <property type="entry name" value="ABC_tran"/>
    <property type="match status" value="1"/>
</dbReference>
<dbReference type="SMART" id="SM00382">
    <property type="entry name" value="AAA"/>
    <property type="match status" value="1"/>
</dbReference>
<dbReference type="SUPFAM" id="SSF52540">
    <property type="entry name" value="P-loop containing nucleoside triphosphate hydrolases"/>
    <property type="match status" value="1"/>
</dbReference>
<dbReference type="PROSITE" id="PS00211">
    <property type="entry name" value="ABC_TRANSPORTER_1"/>
    <property type="match status" value="1"/>
</dbReference>
<dbReference type="PROSITE" id="PS50893">
    <property type="entry name" value="ABC_TRANSPORTER_2"/>
    <property type="match status" value="1"/>
</dbReference>
<gene>
    <name type="primary">abcG22</name>
    <name type="ORF">DDB_G0270826</name>
</gene>
<keyword id="KW-0067">ATP-binding</keyword>
<keyword id="KW-0472">Membrane</keyword>
<keyword id="KW-0547">Nucleotide-binding</keyword>
<keyword id="KW-1185">Reference proteome</keyword>
<keyword id="KW-0812">Transmembrane</keyword>
<keyword id="KW-1133">Transmembrane helix</keyword>
<keyword id="KW-0813">Transport</keyword>